<organism>
    <name type="scientific">Homo sapiens</name>
    <name type="common">Human</name>
    <dbReference type="NCBI Taxonomy" id="9606"/>
    <lineage>
        <taxon>Eukaryota</taxon>
        <taxon>Metazoa</taxon>
        <taxon>Chordata</taxon>
        <taxon>Craniata</taxon>
        <taxon>Vertebrata</taxon>
        <taxon>Euteleostomi</taxon>
        <taxon>Mammalia</taxon>
        <taxon>Eutheria</taxon>
        <taxon>Euarchontoglires</taxon>
        <taxon>Primates</taxon>
        <taxon>Haplorrhini</taxon>
        <taxon>Catarrhini</taxon>
        <taxon>Hominidae</taxon>
        <taxon>Homo</taxon>
    </lineage>
</organism>
<evidence type="ECO:0000250" key="1"/>
<evidence type="ECO:0000250" key="2">
    <source>
        <dbReference type="UniProtKB" id="Q9Z1N9"/>
    </source>
</evidence>
<evidence type="ECO:0000255" key="3"/>
<evidence type="ECO:0000255" key="4">
    <source>
        <dbReference type="PROSITE-ProRule" id="PRU00041"/>
    </source>
</evidence>
<evidence type="ECO:0000255" key="5">
    <source>
        <dbReference type="PROSITE-ProRule" id="PRU00226"/>
    </source>
</evidence>
<evidence type="ECO:0000255" key="6">
    <source>
        <dbReference type="PROSITE-ProRule" id="PRU00587"/>
    </source>
</evidence>
<evidence type="ECO:0000255" key="7">
    <source>
        <dbReference type="PROSITE-ProRule" id="PRU00588"/>
    </source>
</evidence>
<evidence type="ECO:0000256" key="8">
    <source>
        <dbReference type="SAM" id="MobiDB-lite"/>
    </source>
</evidence>
<evidence type="ECO:0000269" key="9">
    <source>
    </source>
</evidence>
<evidence type="ECO:0000269" key="10">
    <source>
    </source>
</evidence>
<evidence type="ECO:0000303" key="11">
    <source>
    </source>
</evidence>
<evidence type="ECO:0000305" key="12"/>
<evidence type="ECO:0000312" key="13">
    <source>
        <dbReference type="HGNC" id="HGNC:12566"/>
    </source>
</evidence>
<evidence type="ECO:0007744" key="14">
    <source>
    </source>
</evidence>
<evidence type="ECO:0007744" key="15">
    <source>
    </source>
</evidence>
<comment type="function">
    <text evidence="2">Plays a role in vesicle maturation during exocytosis as a target of the diacylglycerol second messenger pathway. Is involved in neurotransmitter release by acting in synaptic vesicle priming prior to vesicle fusion and participates in the activity-depending refilling of readily releasable vesicle pool (RRP) (By similarity). Essential for synaptic vesicle maturation in a subset of excitatory/glutamatergic but not inhibitory/GABA-mediated synapses (By similarity). In collaboration with UNC13A, facilitates neuronal dense core vesicles fusion as well as controls the location and efficiency of their synaptic release (By similarity).</text>
</comment>
<comment type="cofactor">
    <cofactor evidence="4">
        <name>Ca(2+)</name>
        <dbReference type="ChEBI" id="CHEBI:29108"/>
    </cofactor>
</comment>
<comment type="subunit">
    <text evidence="1">Interacts with RIMS1.</text>
</comment>
<comment type="interaction">
    <interactant intactId="EBI-727343">
        <id>O14795</id>
    </interactant>
    <interactant intactId="EBI-11993172">
        <id>O95057</id>
        <label>DIRAS1</label>
    </interactant>
    <organismsDiffer>false</organismsDiffer>
    <experiments>2</experiments>
</comment>
<comment type="subcellular location">
    <subcellularLocation>
        <location evidence="1">Cytoplasm</location>
    </subcellularLocation>
    <subcellularLocation>
        <location evidence="1">Membrane</location>
        <topology evidence="1">Peripheral membrane protein</topology>
    </subcellularLocation>
    <subcellularLocation>
        <location evidence="1">Cell membrane</location>
    </subcellularLocation>
    <subcellularLocation>
        <location evidence="1">Synapse</location>
    </subcellularLocation>
    <text evidence="1">Localized to synapses. Translocated to the plasma membrane in response to phorbol ester binding (By similarity).</text>
</comment>
<comment type="alternative products">
    <event type="alternative splicing"/>
    <isoform>
        <id>O14795-1</id>
        <name>1</name>
        <sequence type="displayed"/>
    </isoform>
    <isoform>
        <id>O14795-2</id>
        <name>2</name>
        <sequence type="described" ref="VSP_057319"/>
    </isoform>
</comment>
<comment type="tissue specificity">
    <text evidence="10">Expressed in kidney cortical epithelial cells and brain.</text>
</comment>
<comment type="domain">
    <text evidence="1">The C2 domains are not involved in calcium-dependent phospholipid binding.</text>
</comment>
<comment type="similarity">
    <text evidence="12">Belongs to the unc-13 family.</text>
</comment>
<reference key="1">
    <citation type="journal article" date="1998" name="Kidney Int.">
        <title>Cloning of a novel gene in the human kidney homologous to rat munc13s: its potential role in diabetic nephropathy.</title>
        <authorList>
            <person name="Song Y."/>
            <person name="Ailenberg M."/>
            <person name="Silverman M."/>
        </authorList>
    </citation>
    <scope>NUCLEOTIDE SEQUENCE [MRNA] (ISOFORM 1)</scope>
    <scope>TISSUE SPECIFICITY</scope>
    <source>
        <tissue>Kidney</tissue>
    </source>
</reference>
<reference key="2">
    <citation type="journal article" date="2004" name="Nature">
        <title>DNA sequence and analysis of human chromosome 9.</title>
        <authorList>
            <person name="Humphray S.J."/>
            <person name="Oliver K."/>
            <person name="Hunt A.R."/>
            <person name="Plumb R.W."/>
            <person name="Loveland J.E."/>
            <person name="Howe K.L."/>
            <person name="Andrews T.D."/>
            <person name="Searle S."/>
            <person name="Hunt S.E."/>
            <person name="Scott C.E."/>
            <person name="Jones M.C."/>
            <person name="Ainscough R."/>
            <person name="Almeida J.P."/>
            <person name="Ambrose K.D."/>
            <person name="Ashwell R.I.S."/>
            <person name="Babbage A.K."/>
            <person name="Babbage S."/>
            <person name="Bagguley C.L."/>
            <person name="Bailey J."/>
            <person name="Banerjee R."/>
            <person name="Barker D.J."/>
            <person name="Barlow K.F."/>
            <person name="Bates K."/>
            <person name="Beasley H."/>
            <person name="Beasley O."/>
            <person name="Bird C.P."/>
            <person name="Bray-Allen S."/>
            <person name="Brown A.J."/>
            <person name="Brown J.Y."/>
            <person name="Burford D."/>
            <person name="Burrill W."/>
            <person name="Burton J."/>
            <person name="Carder C."/>
            <person name="Carter N.P."/>
            <person name="Chapman J.C."/>
            <person name="Chen Y."/>
            <person name="Clarke G."/>
            <person name="Clark S.Y."/>
            <person name="Clee C.M."/>
            <person name="Clegg S."/>
            <person name="Collier R.E."/>
            <person name="Corby N."/>
            <person name="Crosier M."/>
            <person name="Cummings A.T."/>
            <person name="Davies J."/>
            <person name="Dhami P."/>
            <person name="Dunn M."/>
            <person name="Dutta I."/>
            <person name="Dyer L.W."/>
            <person name="Earthrowl M.E."/>
            <person name="Faulkner L."/>
            <person name="Fleming C.J."/>
            <person name="Frankish A."/>
            <person name="Frankland J.A."/>
            <person name="French L."/>
            <person name="Fricker D.G."/>
            <person name="Garner P."/>
            <person name="Garnett J."/>
            <person name="Ghori J."/>
            <person name="Gilbert J.G.R."/>
            <person name="Glison C."/>
            <person name="Grafham D.V."/>
            <person name="Gribble S."/>
            <person name="Griffiths C."/>
            <person name="Griffiths-Jones S."/>
            <person name="Grocock R."/>
            <person name="Guy J."/>
            <person name="Hall R.E."/>
            <person name="Hammond S."/>
            <person name="Harley J.L."/>
            <person name="Harrison E.S.I."/>
            <person name="Hart E.A."/>
            <person name="Heath P.D."/>
            <person name="Henderson C.D."/>
            <person name="Hopkins B.L."/>
            <person name="Howard P.J."/>
            <person name="Howden P.J."/>
            <person name="Huckle E."/>
            <person name="Johnson C."/>
            <person name="Johnson D."/>
            <person name="Joy A.A."/>
            <person name="Kay M."/>
            <person name="Keenan S."/>
            <person name="Kershaw J.K."/>
            <person name="Kimberley A.M."/>
            <person name="King A."/>
            <person name="Knights A."/>
            <person name="Laird G.K."/>
            <person name="Langford C."/>
            <person name="Lawlor S."/>
            <person name="Leongamornlert D.A."/>
            <person name="Leversha M."/>
            <person name="Lloyd C."/>
            <person name="Lloyd D.M."/>
            <person name="Lovell J."/>
            <person name="Martin S."/>
            <person name="Mashreghi-Mohammadi M."/>
            <person name="Matthews L."/>
            <person name="McLaren S."/>
            <person name="McLay K.E."/>
            <person name="McMurray A."/>
            <person name="Milne S."/>
            <person name="Nickerson T."/>
            <person name="Nisbett J."/>
            <person name="Nordsiek G."/>
            <person name="Pearce A.V."/>
            <person name="Peck A.I."/>
            <person name="Porter K.M."/>
            <person name="Pandian R."/>
            <person name="Pelan S."/>
            <person name="Phillimore B."/>
            <person name="Povey S."/>
            <person name="Ramsey Y."/>
            <person name="Rand V."/>
            <person name="Scharfe M."/>
            <person name="Sehra H.K."/>
            <person name="Shownkeen R."/>
            <person name="Sims S.K."/>
            <person name="Skuce C.D."/>
            <person name="Smith M."/>
            <person name="Steward C.A."/>
            <person name="Swarbreck D."/>
            <person name="Sycamore N."/>
            <person name="Tester J."/>
            <person name="Thorpe A."/>
            <person name="Tracey A."/>
            <person name="Tromans A."/>
            <person name="Thomas D.W."/>
            <person name="Wall M."/>
            <person name="Wallis J.M."/>
            <person name="West A.P."/>
            <person name="Whitehead S.L."/>
            <person name="Willey D.L."/>
            <person name="Williams S.A."/>
            <person name="Wilming L."/>
            <person name="Wray P.W."/>
            <person name="Young L."/>
            <person name="Ashurst J.L."/>
            <person name="Coulson A."/>
            <person name="Blocker H."/>
            <person name="Durbin R.M."/>
            <person name="Sulston J.E."/>
            <person name="Hubbard T."/>
            <person name="Jackson M.J."/>
            <person name="Bentley D.R."/>
            <person name="Beck S."/>
            <person name="Rogers J."/>
            <person name="Dunham I."/>
        </authorList>
    </citation>
    <scope>NUCLEOTIDE SEQUENCE [LARGE SCALE GENOMIC DNA]</scope>
</reference>
<reference key="3">
    <citation type="submission" date="2005-09" db="EMBL/GenBank/DDBJ databases">
        <authorList>
            <person name="Mural R.J."/>
            <person name="Istrail S."/>
            <person name="Sutton G.G."/>
            <person name="Florea L."/>
            <person name="Halpern A.L."/>
            <person name="Mobarry C.M."/>
            <person name="Lippert R."/>
            <person name="Walenz B."/>
            <person name="Shatkay H."/>
            <person name="Dew I."/>
            <person name="Miller J.R."/>
            <person name="Flanigan M.J."/>
            <person name="Edwards N.J."/>
            <person name="Bolanos R."/>
            <person name="Fasulo D."/>
            <person name="Halldorsson B.V."/>
            <person name="Hannenhalli S."/>
            <person name="Turner R."/>
            <person name="Yooseph S."/>
            <person name="Lu F."/>
            <person name="Nusskern D.R."/>
            <person name="Shue B.C."/>
            <person name="Zheng X.H."/>
            <person name="Zhong F."/>
            <person name="Delcher A.L."/>
            <person name="Huson D.H."/>
            <person name="Kravitz S.A."/>
            <person name="Mouchard L."/>
            <person name="Reinert K."/>
            <person name="Remington K.A."/>
            <person name="Clark A.G."/>
            <person name="Waterman M.S."/>
            <person name="Eichler E.E."/>
            <person name="Adams M.D."/>
            <person name="Hunkapiller M.W."/>
            <person name="Myers E.W."/>
            <person name="Venter J.C."/>
        </authorList>
    </citation>
    <scope>NUCLEOTIDE SEQUENCE [LARGE SCALE GENOMIC DNA]</scope>
</reference>
<reference key="4">
    <citation type="journal article" date="2004" name="Genome Res.">
        <title>The status, quality, and expansion of the NIH full-length cDNA project: the Mammalian Gene Collection (MGC).</title>
        <authorList>
            <consortium name="The MGC Project Team"/>
        </authorList>
    </citation>
    <scope>NUCLEOTIDE SEQUENCE [LARGE SCALE MRNA] (ISOFORM 2)</scope>
</reference>
<reference key="5">
    <citation type="journal article" date="1999" name="Mol. Biol. Cell">
        <title>Human munc13 is a diacylglycerol receptor that induces apoptosis and may contribute to renal cell injury in hyperglycemia.</title>
        <authorList>
            <person name="Song Y."/>
            <person name="Ailenberg M."/>
            <person name="Silverman M."/>
        </authorList>
    </citation>
    <scope>SUBCELLULAR LOCATION</scope>
</reference>
<reference key="6">
    <citation type="journal article" date="2008" name="Proc. Natl. Acad. Sci. U.S.A.">
        <title>A quantitative atlas of mitotic phosphorylation.</title>
        <authorList>
            <person name="Dephoure N."/>
            <person name="Zhou C."/>
            <person name="Villen J."/>
            <person name="Beausoleil S.A."/>
            <person name="Bakalarski C.E."/>
            <person name="Elledge S.J."/>
            <person name="Gygi S.P."/>
        </authorList>
    </citation>
    <scope>IDENTIFICATION BY MASS SPECTROMETRY [LARGE SCALE ANALYSIS]</scope>
    <source>
        <tissue>Cervix carcinoma</tissue>
    </source>
</reference>
<reference key="7">
    <citation type="journal article" date="2010" name="Sci. Signal.">
        <title>Quantitative phosphoproteomics reveals widespread full phosphorylation site occupancy during mitosis.</title>
        <authorList>
            <person name="Olsen J.V."/>
            <person name="Vermeulen M."/>
            <person name="Santamaria A."/>
            <person name="Kumar C."/>
            <person name="Miller M.L."/>
            <person name="Jensen L.J."/>
            <person name="Gnad F."/>
            <person name="Cox J."/>
            <person name="Jensen T.S."/>
            <person name="Nigg E.A."/>
            <person name="Brunak S."/>
            <person name="Mann M."/>
        </authorList>
    </citation>
    <scope>IDENTIFICATION BY MASS SPECTROMETRY [LARGE SCALE ANALYSIS]</scope>
    <source>
        <tissue>Cervix carcinoma</tissue>
    </source>
</reference>
<reference key="8">
    <citation type="journal article" date="2013" name="J. Proteome Res.">
        <title>Toward a comprehensive characterization of a human cancer cell phosphoproteome.</title>
        <authorList>
            <person name="Zhou H."/>
            <person name="Di Palma S."/>
            <person name="Preisinger C."/>
            <person name="Peng M."/>
            <person name="Polat A.N."/>
            <person name="Heck A.J."/>
            <person name="Mohammed S."/>
        </authorList>
    </citation>
    <scope>PHOSPHORYLATION [LARGE SCALE ANALYSIS] AT SER-16 AND SER-367</scope>
    <scope>IDENTIFICATION BY MASS SPECTROMETRY [LARGE SCALE ANALYSIS]</scope>
    <source>
        <tissue>Cervix carcinoma</tissue>
        <tissue>Erythroleukemia</tissue>
    </source>
</reference>
<reference key="9">
    <citation type="journal article" date="2014" name="J. Proteomics">
        <title>An enzyme assisted RP-RPLC approach for in-depth analysis of human liver phosphoproteome.</title>
        <authorList>
            <person name="Bian Y."/>
            <person name="Song C."/>
            <person name="Cheng K."/>
            <person name="Dong M."/>
            <person name="Wang F."/>
            <person name="Huang J."/>
            <person name="Sun D."/>
            <person name="Wang L."/>
            <person name="Ye M."/>
            <person name="Zou H."/>
        </authorList>
    </citation>
    <scope>PHOSPHORYLATION [LARGE SCALE ANALYSIS] AT SER-176 AND SER-295</scope>
    <scope>IDENTIFICATION BY MASS SPECTROMETRY [LARGE SCALE ANALYSIS]</scope>
    <source>
        <tissue>Liver</tissue>
    </source>
</reference>
<reference key="10">
    <citation type="journal article" date="2006" name="Science">
        <title>The consensus coding sequences of human breast and colorectal cancers.</title>
        <authorList>
            <person name="Sjoeblom T."/>
            <person name="Jones S."/>
            <person name="Wood L.D."/>
            <person name="Parsons D.W."/>
            <person name="Lin J."/>
            <person name="Barber T.D."/>
            <person name="Mandelker D."/>
            <person name="Leary R.J."/>
            <person name="Ptak J."/>
            <person name="Silliman N."/>
            <person name="Szabo S."/>
            <person name="Buckhaults P."/>
            <person name="Farrell C."/>
            <person name="Meeh P."/>
            <person name="Markowitz S.D."/>
            <person name="Willis J."/>
            <person name="Dawson D."/>
            <person name="Willson J.K.V."/>
            <person name="Gazdar A.F."/>
            <person name="Hartigan J."/>
            <person name="Wu L."/>
            <person name="Liu C."/>
            <person name="Parmigiani G."/>
            <person name="Park B.H."/>
            <person name="Bachman K.E."/>
            <person name="Papadopoulos N."/>
            <person name="Vogelstein B."/>
            <person name="Kinzler K.W."/>
            <person name="Velculescu V.E."/>
        </authorList>
    </citation>
    <scope>VARIANT [LARGE SCALE ANALYSIS] SER-209</scope>
</reference>
<dbReference type="EMBL" id="AF020202">
    <property type="protein sequence ID" value="AAC19406.1"/>
    <property type="molecule type" value="mRNA"/>
</dbReference>
<dbReference type="EMBL" id="AL353795">
    <property type="status" value="NOT_ANNOTATED_CDS"/>
    <property type="molecule type" value="Genomic_DNA"/>
</dbReference>
<dbReference type="EMBL" id="AL354669">
    <property type="status" value="NOT_ANNOTATED_CDS"/>
    <property type="molecule type" value="Genomic_DNA"/>
</dbReference>
<dbReference type="EMBL" id="AL160274">
    <property type="status" value="NOT_ANNOTATED_CDS"/>
    <property type="molecule type" value="Genomic_DNA"/>
</dbReference>
<dbReference type="EMBL" id="CH471071">
    <property type="protein sequence ID" value="EAW58383.1"/>
    <property type="molecule type" value="Genomic_DNA"/>
</dbReference>
<dbReference type="EMBL" id="BC111781">
    <property type="protein sequence ID" value="AAI11782.1"/>
    <property type="molecule type" value="mRNA"/>
</dbReference>
<dbReference type="CCDS" id="CCDS6579.1">
    <molecule id="O14795-1"/>
</dbReference>
<dbReference type="CCDS" id="CCDS83361.1">
    <molecule id="O14795-2"/>
</dbReference>
<dbReference type="RefSeq" id="NP_001317582.1">
    <molecule id="O14795-2"/>
    <property type="nucleotide sequence ID" value="NM_001330653.3"/>
</dbReference>
<dbReference type="RefSeq" id="NP_006368.3">
    <molecule id="O14795-1"/>
    <property type="nucleotide sequence ID" value="NM_006377.3"/>
</dbReference>
<dbReference type="SMR" id="O14795"/>
<dbReference type="BioGRID" id="115759">
    <property type="interactions" value="48"/>
</dbReference>
<dbReference type="FunCoup" id="O14795">
    <property type="interactions" value="274"/>
</dbReference>
<dbReference type="IntAct" id="O14795">
    <property type="interactions" value="23"/>
</dbReference>
<dbReference type="STRING" id="9606.ENSP00000479261"/>
<dbReference type="GlyGen" id="O14795">
    <property type="glycosylation" value="4 sites, 1 O-linked glycan (3 sites)"/>
</dbReference>
<dbReference type="iPTMnet" id="O14795"/>
<dbReference type="PhosphoSitePlus" id="O14795"/>
<dbReference type="SwissPalm" id="O14795"/>
<dbReference type="BioMuta" id="UNC13B"/>
<dbReference type="jPOST" id="O14795"/>
<dbReference type="MassIVE" id="O14795"/>
<dbReference type="PaxDb" id="9606-ENSP00000367756"/>
<dbReference type="PeptideAtlas" id="O14795"/>
<dbReference type="ProteomicsDB" id="48244">
    <molecule id="O14795-1"/>
</dbReference>
<dbReference type="Pumba" id="O14795"/>
<dbReference type="Antibodypedia" id="11512">
    <property type="antibodies" value="185 antibodies from 28 providers"/>
</dbReference>
<dbReference type="DNASU" id="10497"/>
<dbReference type="Ensembl" id="ENST00000378495.7">
    <molecule id="O14795-1"/>
    <property type="protein sequence ID" value="ENSP00000367756.3"/>
    <property type="gene ID" value="ENSG00000198722.15"/>
</dbReference>
<dbReference type="Ensembl" id="ENST00000619578.4">
    <molecule id="O14795-2"/>
    <property type="protein sequence ID" value="ENSP00000479261.1"/>
    <property type="gene ID" value="ENSG00000198722.15"/>
</dbReference>
<dbReference type="GeneID" id="10497"/>
<dbReference type="KEGG" id="hsa:10497"/>
<dbReference type="UCSC" id="uc003zwq.4">
    <molecule id="O14795-1"/>
    <property type="organism name" value="human"/>
</dbReference>
<dbReference type="AGR" id="HGNC:12566"/>
<dbReference type="CTD" id="10497"/>
<dbReference type="DisGeNET" id="10497"/>
<dbReference type="GeneCards" id="UNC13B"/>
<dbReference type="HGNC" id="HGNC:12566">
    <property type="gene designation" value="UNC13B"/>
</dbReference>
<dbReference type="HPA" id="ENSG00000198722">
    <property type="expression patterns" value="Low tissue specificity"/>
</dbReference>
<dbReference type="MalaCards" id="UNC13B"/>
<dbReference type="MIM" id="605836">
    <property type="type" value="gene"/>
</dbReference>
<dbReference type="neXtProt" id="NX_O14795"/>
<dbReference type="OpenTargets" id="ENSG00000198722"/>
<dbReference type="PharmGKB" id="PA37203"/>
<dbReference type="VEuPathDB" id="HostDB:ENSG00000198722"/>
<dbReference type="eggNOG" id="KOG1011">
    <property type="taxonomic scope" value="Eukaryota"/>
</dbReference>
<dbReference type="GeneTree" id="ENSGT00940000154929"/>
<dbReference type="HOGENOM" id="CLU_001304_3_0_1"/>
<dbReference type="InParanoid" id="O14795"/>
<dbReference type="OMA" id="LKDEELX"/>
<dbReference type="OrthoDB" id="10053234at2759"/>
<dbReference type="PAN-GO" id="O14795">
    <property type="GO annotations" value="15 GO annotations based on evolutionary models"/>
</dbReference>
<dbReference type="PhylomeDB" id="O14795"/>
<dbReference type="TreeFam" id="TF312844"/>
<dbReference type="PathwayCommons" id="O14795"/>
<dbReference type="Reactome" id="R-HSA-181429">
    <property type="pathway name" value="Serotonin Neurotransmitter Release Cycle"/>
</dbReference>
<dbReference type="Reactome" id="R-HSA-181430">
    <property type="pathway name" value="Norepinephrine Neurotransmitter Release Cycle"/>
</dbReference>
<dbReference type="Reactome" id="R-HSA-210500">
    <property type="pathway name" value="Glutamate Neurotransmitter Release Cycle"/>
</dbReference>
<dbReference type="Reactome" id="R-HSA-212676">
    <property type="pathway name" value="Dopamine Neurotransmitter Release Cycle"/>
</dbReference>
<dbReference type="Reactome" id="R-HSA-264642">
    <property type="pathway name" value="Acetylcholine Neurotransmitter Release Cycle"/>
</dbReference>
<dbReference type="SignaLink" id="O14795"/>
<dbReference type="SIGNOR" id="O14795"/>
<dbReference type="BioGRID-ORCS" id="10497">
    <property type="hits" value="7 hits in 1154 CRISPR screens"/>
</dbReference>
<dbReference type="ChiTaRS" id="UNC13B">
    <property type="organism name" value="human"/>
</dbReference>
<dbReference type="GeneWiki" id="UNC13B"/>
<dbReference type="GenomeRNAi" id="10497"/>
<dbReference type="Pharos" id="O14795">
    <property type="development level" value="Tbio"/>
</dbReference>
<dbReference type="PRO" id="PR:O14795"/>
<dbReference type="Proteomes" id="UP000005640">
    <property type="component" value="Chromosome 9"/>
</dbReference>
<dbReference type="RNAct" id="O14795">
    <property type="molecule type" value="protein"/>
</dbReference>
<dbReference type="Bgee" id="ENSG00000198722">
    <property type="expression patterns" value="Expressed in right lung and 209 other cell types or tissues"/>
</dbReference>
<dbReference type="ExpressionAtlas" id="O14795">
    <property type="expression patterns" value="baseline and differential"/>
</dbReference>
<dbReference type="GO" id="GO:0005829">
    <property type="term" value="C:cytosol"/>
    <property type="evidence" value="ECO:0000314"/>
    <property type="project" value="UniProtKB"/>
</dbReference>
<dbReference type="GO" id="GO:0005794">
    <property type="term" value="C:Golgi apparatus"/>
    <property type="evidence" value="ECO:0000314"/>
    <property type="project" value="UniProtKB"/>
</dbReference>
<dbReference type="GO" id="GO:0016020">
    <property type="term" value="C:membrane"/>
    <property type="evidence" value="ECO:0000314"/>
    <property type="project" value="ParkinsonsUK-UCL"/>
</dbReference>
<dbReference type="GO" id="GO:0031594">
    <property type="term" value="C:neuromuscular junction"/>
    <property type="evidence" value="ECO:0000318"/>
    <property type="project" value="GO_Central"/>
</dbReference>
<dbReference type="GO" id="GO:0005886">
    <property type="term" value="C:plasma membrane"/>
    <property type="evidence" value="ECO:0000250"/>
    <property type="project" value="ParkinsonsUK-UCL"/>
</dbReference>
<dbReference type="GO" id="GO:0048786">
    <property type="term" value="C:presynaptic active zone"/>
    <property type="evidence" value="ECO:0000304"/>
    <property type="project" value="ParkinsonsUK-UCL"/>
</dbReference>
<dbReference type="GO" id="GO:0042734">
    <property type="term" value="C:presynaptic membrane"/>
    <property type="evidence" value="ECO:0000318"/>
    <property type="project" value="GO_Central"/>
</dbReference>
<dbReference type="GO" id="GO:0030672">
    <property type="term" value="C:synaptic vesicle membrane"/>
    <property type="evidence" value="ECO:0000318"/>
    <property type="project" value="GO_Central"/>
</dbReference>
<dbReference type="GO" id="GO:0043195">
    <property type="term" value="C:terminal bouton"/>
    <property type="evidence" value="ECO:0000250"/>
    <property type="project" value="ParkinsonsUK-UCL"/>
</dbReference>
<dbReference type="GO" id="GO:0005509">
    <property type="term" value="F:calcium ion binding"/>
    <property type="evidence" value="ECO:0007669"/>
    <property type="project" value="InterPro"/>
</dbReference>
<dbReference type="GO" id="GO:0005516">
    <property type="term" value="F:calmodulin binding"/>
    <property type="evidence" value="ECO:0000250"/>
    <property type="project" value="ParkinsonsUK-UCL"/>
</dbReference>
<dbReference type="GO" id="GO:0019992">
    <property type="term" value="F:diacylglycerol binding"/>
    <property type="evidence" value="ECO:0000303"/>
    <property type="project" value="ParkinsonsUK-UCL"/>
</dbReference>
<dbReference type="GO" id="GO:0030742">
    <property type="term" value="F:GTP-dependent protein binding"/>
    <property type="evidence" value="ECO:0000353"/>
    <property type="project" value="ParkinsonsUK-UCL"/>
</dbReference>
<dbReference type="GO" id="GO:0005543">
    <property type="term" value="F:phospholipid binding"/>
    <property type="evidence" value="ECO:0007669"/>
    <property type="project" value="InterPro"/>
</dbReference>
<dbReference type="GO" id="GO:0031267">
    <property type="term" value="F:small GTPase binding"/>
    <property type="evidence" value="ECO:0000303"/>
    <property type="project" value="ParkinsonsUK-UCL"/>
</dbReference>
<dbReference type="GO" id="GO:0017075">
    <property type="term" value="F:syntaxin-1 binding"/>
    <property type="evidence" value="ECO:0000318"/>
    <property type="project" value="GO_Central"/>
</dbReference>
<dbReference type="GO" id="GO:0008270">
    <property type="term" value="F:zinc ion binding"/>
    <property type="evidence" value="ECO:0007669"/>
    <property type="project" value="UniProtKB-KW"/>
</dbReference>
<dbReference type="GO" id="GO:0060478">
    <property type="term" value="P:acrosomal vesicle exocytosis"/>
    <property type="evidence" value="ECO:0000314"/>
    <property type="project" value="UniProtKB"/>
</dbReference>
<dbReference type="GO" id="GO:0071333">
    <property type="term" value="P:cellular response to glucose stimulus"/>
    <property type="evidence" value="ECO:0000314"/>
    <property type="project" value="ParkinsonsUK-UCL"/>
</dbReference>
<dbReference type="GO" id="GO:0007268">
    <property type="term" value="P:chemical synaptic transmission"/>
    <property type="evidence" value="ECO:0000250"/>
    <property type="project" value="ParkinsonsUK-UCL"/>
</dbReference>
<dbReference type="GO" id="GO:0061789">
    <property type="term" value="P:dense core granule priming"/>
    <property type="evidence" value="ECO:0000318"/>
    <property type="project" value="GO_Central"/>
</dbReference>
<dbReference type="GO" id="GO:0099011">
    <property type="term" value="P:neuronal dense core vesicle exocytosis"/>
    <property type="evidence" value="ECO:0000250"/>
    <property type="project" value="UniProtKB"/>
</dbReference>
<dbReference type="GO" id="GO:0043065">
    <property type="term" value="P:positive regulation of apoptotic process"/>
    <property type="evidence" value="ECO:0000314"/>
    <property type="project" value="ParkinsonsUK-UCL"/>
</dbReference>
<dbReference type="GO" id="GO:0097151">
    <property type="term" value="P:positive regulation of inhibitory postsynaptic potential"/>
    <property type="evidence" value="ECO:0000250"/>
    <property type="project" value="ParkinsonsUK-UCL"/>
</dbReference>
<dbReference type="GO" id="GO:0050714">
    <property type="term" value="P:positive regulation of protein secretion"/>
    <property type="evidence" value="ECO:0000314"/>
    <property type="project" value="ParkinsonsUK-UCL"/>
</dbReference>
<dbReference type="GO" id="GO:0010808">
    <property type="term" value="P:positive regulation of synaptic vesicle priming"/>
    <property type="evidence" value="ECO:0000250"/>
    <property type="project" value="ParkinsonsUK-UCL"/>
</dbReference>
<dbReference type="GO" id="GO:0035249">
    <property type="term" value="P:synaptic transmission, glutamatergic"/>
    <property type="evidence" value="ECO:0000318"/>
    <property type="project" value="GO_Central"/>
</dbReference>
<dbReference type="GO" id="GO:0016081">
    <property type="term" value="P:synaptic vesicle docking"/>
    <property type="evidence" value="ECO:0000318"/>
    <property type="project" value="GO_Central"/>
</dbReference>
<dbReference type="GO" id="GO:0016082">
    <property type="term" value="P:synaptic vesicle priming"/>
    <property type="evidence" value="ECO:0000250"/>
    <property type="project" value="ParkinsonsUK-UCL"/>
</dbReference>
<dbReference type="CDD" id="cd20859">
    <property type="entry name" value="C1_Munc13-2-like"/>
    <property type="match status" value="1"/>
</dbReference>
<dbReference type="CDD" id="cd08394">
    <property type="entry name" value="C2A_Munc13"/>
    <property type="match status" value="1"/>
</dbReference>
<dbReference type="CDD" id="cd04027">
    <property type="entry name" value="C2B_Munc13"/>
    <property type="match status" value="1"/>
</dbReference>
<dbReference type="CDD" id="cd08395">
    <property type="entry name" value="C2C_Munc13"/>
    <property type="match status" value="1"/>
</dbReference>
<dbReference type="FunFam" id="1.10.357.50:FF:000001">
    <property type="entry name" value="Protein unc-13 homolog B"/>
    <property type="match status" value="1"/>
</dbReference>
<dbReference type="FunFam" id="1.20.58.1100:FF:000001">
    <property type="entry name" value="Protein unc-13 homolog B"/>
    <property type="match status" value="1"/>
</dbReference>
<dbReference type="FunFam" id="2.60.40.150:FF:000002">
    <property type="entry name" value="Protein unc-13 homolog B"/>
    <property type="match status" value="1"/>
</dbReference>
<dbReference type="FunFam" id="2.60.40.150:FF:000031">
    <property type="entry name" value="Protein unc-13 homolog B"/>
    <property type="match status" value="1"/>
</dbReference>
<dbReference type="FunFam" id="3.30.60.20:FF:000001">
    <property type="entry name" value="Protein unc-13 homolog B"/>
    <property type="match status" value="1"/>
</dbReference>
<dbReference type="FunFam" id="2.60.40.150:FF:000014">
    <property type="entry name" value="protein unc-13 homolog B"/>
    <property type="match status" value="1"/>
</dbReference>
<dbReference type="Gene3D" id="1.10.357.50">
    <property type="match status" value="1"/>
</dbReference>
<dbReference type="Gene3D" id="1.20.58.1100">
    <property type="match status" value="1"/>
</dbReference>
<dbReference type="Gene3D" id="3.30.60.20">
    <property type="match status" value="1"/>
</dbReference>
<dbReference type="Gene3D" id="2.60.40.150">
    <property type="entry name" value="C2 domain"/>
    <property type="match status" value="3"/>
</dbReference>
<dbReference type="InterPro" id="IPR046349">
    <property type="entry name" value="C1-like_sf"/>
</dbReference>
<dbReference type="InterPro" id="IPR000008">
    <property type="entry name" value="C2_dom"/>
</dbReference>
<dbReference type="InterPro" id="IPR035892">
    <property type="entry name" value="C2_domain_sf"/>
</dbReference>
<dbReference type="InterPro" id="IPR010439">
    <property type="entry name" value="MUN_dom"/>
</dbReference>
<dbReference type="InterPro" id="IPR014770">
    <property type="entry name" value="Munc13_1"/>
</dbReference>
<dbReference type="InterPro" id="IPR014772">
    <property type="entry name" value="Munc13_dom-2"/>
</dbReference>
<dbReference type="InterPro" id="IPR002219">
    <property type="entry name" value="PE/DAG-bd"/>
</dbReference>
<dbReference type="InterPro" id="IPR027080">
    <property type="entry name" value="Unc-13"/>
</dbReference>
<dbReference type="InterPro" id="IPR037302">
    <property type="entry name" value="Unc-13_C2B"/>
</dbReference>
<dbReference type="PANTHER" id="PTHR10480">
    <property type="entry name" value="PROTEIN UNC-13 HOMOLOG"/>
    <property type="match status" value="1"/>
</dbReference>
<dbReference type="PANTHER" id="PTHR10480:SF8">
    <property type="entry name" value="PROTEIN UNC-13 HOMOLOG B"/>
    <property type="match status" value="1"/>
</dbReference>
<dbReference type="Pfam" id="PF00130">
    <property type="entry name" value="C1_1"/>
    <property type="match status" value="1"/>
</dbReference>
<dbReference type="Pfam" id="PF00168">
    <property type="entry name" value="C2"/>
    <property type="match status" value="3"/>
</dbReference>
<dbReference type="Pfam" id="PF06292">
    <property type="entry name" value="MUN"/>
    <property type="match status" value="1"/>
</dbReference>
<dbReference type="PRINTS" id="PR00360">
    <property type="entry name" value="C2DOMAIN"/>
</dbReference>
<dbReference type="SMART" id="SM00109">
    <property type="entry name" value="C1"/>
    <property type="match status" value="1"/>
</dbReference>
<dbReference type="SMART" id="SM00239">
    <property type="entry name" value="C2"/>
    <property type="match status" value="3"/>
</dbReference>
<dbReference type="SMART" id="SM01145">
    <property type="entry name" value="DUF1041"/>
    <property type="match status" value="1"/>
</dbReference>
<dbReference type="SUPFAM" id="SSF49562">
    <property type="entry name" value="C2 domain (Calcium/lipid-binding domain, CaLB)"/>
    <property type="match status" value="3"/>
</dbReference>
<dbReference type="SUPFAM" id="SSF57889">
    <property type="entry name" value="Cysteine-rich domain"/>
    <property type="match status" value="1"/>
</dbReference>
<dbReference type="PROSITE" id="PS50004">
    <property type="entry name" value="C2"/>
    <property type="match status" value="3"/>
</dbReference>
<dbReference type="PROSITE" id="PS51258">
    <property type="entry name" value="MHD1"/>
    <property type="match status" value="1"/>
</dbReference>
<dbReference type="PROSITE" id="PS51259">
    <property type="entry name" value="MHD2"/>
    <property type="match status" value="1"/>
</dbReference>
<dbReference type="PROSITE" id="PS00479">
    <property type="entry name" value="ZF_DAG_PE_1"/>
    <property type="match status" value="1"/>
</dbReference>
<dbReference type="PROSITE" id="PS50081">
    <property type="entry name" value="ZF_DAG_PE_2"/>
    <property type="match status" value="1"/>
</dbReference>
<accession>O14795</accession>
<accession>Q2NKJ5</accession>
<accession>Q5VYM8</accession>
<sequence>MSLLCVRVKRAKFQGSPDKFNTYVTLKVQNVKSTTVAVRGDQPSWEQDFMFEISRLDLGLSVEVWNKGLIWDTMVGTVWIALKTIRQSDEEGPGEWSTLEAETLMKDDEICGTRNPTPHKILLDTRFELPFDIPEEEARYWTYKWEQINALGADNEYSSQEESQRKPLPTAAAQCSFEDPDSAVDDRDSDYRSETSNSFPPPYHTASQPNASVHQFPVPVRSPQQLLLQGSSRDSCNDSMQSYDLDYPERRAISPTSSSRYGSSCNVSQGSSQLSELDQYHEQDDDHRETDSIHSCHSSHSLSRDGQAGFGEQEKPLEVTGQAEKEAACEPKEMKEDATTHPPPDLVLQKDHFLGPQESFPEENASSPFTQARAHWIRAVTKVRLQLQEIPDDGDPSLPQWLPEGPAGGLYGIDSMPDLRRKKPLPLVSDLSLVQSRKAGITSAMATRTSLKDEELKSHVYKKTLQALIYPISCTTPHNFEVWTATTPTYCYECEGLLWGIARQGMRCSECGVKCHEKCQDLLNADCLQRAAEKSCKHGAEDRTQNIIMAMKDRMKIRERNKPEIFEVIRDVFTVNKAAHVQQMKTVKQSVLDGTSKWSAKITITVVCAQGLQAKDKTGSSDPYVTVQVSKTKKRTKTIFGNLNPVWEEKFHFECHNSSDRIKVRVWDEDDDIKSRVKQRLKRESDDFLGQTIIEVRTLSGEMDVWYNLEKRTDKSAVSGAIRLQISVEIKGEEKVAPYHVQYTCLHENLFHYLTDIQGSGGVRIPEARGDDAWKVYFDETAQEIVDEFAMRYGIESIYQAMTHFACLSSKYMCPGVPAVMSTLLANINAYYAHTTASTNVSASDRFAASNFGKERFVKLLDQLHNSLRIDLSTYRNNFPAGSPERLQDLKSTVDLLTSITFFRMKVQELQSPPRASQVVKDCVKACLNSTYEYIFNNCHDLYSRQYQLKQELPPEEQGPSIRNLDFWPKLITLIVSIIEEDKNSYTPVLNQFPQELNVGKVSAEVMWHLFAQDMKYALEEHEKDHLCKSADYMNLHFKVKWLHNEYVRDLPVLQGQVPEYPAWFEQFVLQWLDENEDVSLEFLRGALERDKKDGFQQTSEHALFSCSVVDVFTQLNQSFEIIRKLECPDPSILAHYMRRFAKTIGKVLMQYADILSKDFPAYCTKEKLPCILMNNVQQLRVQLEKMFEAMGGKELDLEAADSLKELQVKLNTVLDELSMVFGNSFQVRIDECVRQMADILGQVRGTGNASPDARASAAQDADSVLRPLMDFLDGNLTLFATVCEKTVLKRVLKELWRVVMNTMERMIVLPPLTDQTGTQLIFTAAKELSHLSKLKDHMVREETRNLTPKQCAVLDLALDTIKQYFHAGGNGLKKTFLEKSPDLQSLRYALSLYTQTTDTLIKTFVRSQTTQGSGVDDPVGEVSIQVDLFTHPGTGEHKVTVKVVAANDLKWQTAGMFRPFVEVTMVGPHQSDKKRKFTTKSKSNNWAPKYNETFHFLLGNEEGPESYELQICVKDYCFAREDRVLGLAVMPLRDVTAKGSCACWCPLGRKIHMDETGLTILRILSQRSNDEVAREFVKLKSESRSTEEGS</sequence>
<gene>
    <name evidence="13" type="primary">UNC13B</name>
    <name type="synonym">UNC13</name>
</gene>
<protein>
    <recommendedName>
        <fullName evidence="12">Protein unc-13 homolog B</fullName>
    </recommendedName>
    <alternativeName>
        <fullName>Munc13-2</fullName>
        <shortName>munc13</shortName>
    </alternativeName>
</protein>
<keyword id="KW-0025">Alternative splicing</keyword>
<keyword id="KW-0106">Calcium</keyword>
<keyword id="KW-1003">Cell membrane</keyword>
<keyword id="KW-0175">Coiled coil</keyword>
<keyword id="KW-0963">Cytoplasm</keyword>
<keyword id="KW-0268">Exocytosis</keyword>
<keyword id="KW-0472">Membrane</keyword>
<keyword id="KW-0479">Metal-binding</keyword>
<keyword id="KW-0597">Phosphoprotein</keyword>
<keyword id="KW-1267">Proteomics identification</keyword>
<keyword id="KW-1185">Reference proteome</keyword>
<keyword id="KW-0677">Repeat</keyword>
<keyword id="KW-0770">Synapse</keyword>
<keyword id="KW-0862">Zinc</keyword>
<keyword id="KW-0863">Zinc-finger</keyword>
<name>UN13B_HUMAN</name>
<feature type="chain" id="PRO_0000188575" description="Protein unc-13 homolog B">
    <location>
        <begin position="1"/>
        <end position="1591"/>
    </location>
</feature>
<feature type="domain" description="C2 2" evidence="4">
    <location>
        <begin position="583"/>
        <end position="707"/>
    </location>
</feature>
<feature type="domain" description="MHD1" evidence="6">
    <location>
        <begin position="1013"/>
        <end position="1156"/>
    </location>
</feature>
<feature type="domain" description="MHD2" evidence="7">
    <location>
        <begin position="1263"/>
        <end position="1405"/>
    </location>
</feature>
<feature type="domain" description="C2 3" evidence="4">
    <location>
        <begin position="1419"/>
        <end position="1546"/>
    </location>
</feature>
<feature type="zinc finger region" description="Phorbol-ester/DAG-type" evidence="5">
    <location>
        <begin position="477"/>
        <end position="527"/>
    </location>
</feature>
<feature type="region of interest" description="Disordered" evidence="8">
    <location>
        <begin position="155"/>
        <end position="210"/>
    </location>
</feature>
<feature type="region of interest" description="Disordered" evidence="8">
    <location>
        <begin position="230"/>
        <end position="350"/>
    </location>
</feature>
<feature type="coiled-coil region" evidence="3">
    <location>
        <begin position="1172"/>
        <end position="1202"/>
    </location>
</feature>
<feature type="compositionally biased region" description="Basic and acidic residues" evidence="8">
    <location>
        <begin position="184"/>
        <end position="193"/>
    </location>
</feature>
<feature type="compositionally biased region" description="Polar residues" evidence="8">
    <location>
        <begin position="230"/>
        <end position="242"/>
    </location>
</feature>
<feature type="compositionally biased region" description="Polar residues" evidence="8">
    <location>
        <begin position="254"/>
        <end position="276"/>
    </location>
</feature>
<feature type="compositionally biased region" description="Basic and acidic residues" evidence="8">
    <location>
        <begin position="278"/>
        <end position="294"/>
    </location>
</feature>
<feature type="compositionally biased region" description="Basic and acidic residues" evidence="8">
    <location>
        <begin position="312"/>
        <end position="339"/>
    </location>
</feature>
<feature type="binding site" evidence="4">
    <location>
        <position position="616"/>
    </location>
    <ligand>
        <name>Ca(2+)</name>
        <dbReference type="ChEBI" id="CHEBI:29108"/>
        <label>1</label>
    </ligand>
</feature>
<feature type="binding site" evidence="4">
    <location>
        <position position="616"/>
    </location>
    <ligand>
        <name>Ca(2+)</name>
        <dbReference type="ChEBI" id="CHEBI:29108"/>
        <label>2</label>
    </ligand>
</feature>
<feature type="binding site" evidence="4">
    <location>
        <position position="622"/>
    </location>
    <ligand>
        <name>Ca(2+)</name>
        <dbReference type="ChEBI" id="CHEBI:29108"/>
        <label>1</label>
    </ligand>
</feature>
<feature type="binding site" evidence="4">
    <location>
        <position position="668"/>
    </location>
    <ligand>
        <name>Ca(2+)</name>
        <dbReference type="ChEBI" id="CHEBI:29108"/>
        <label>1</label>
    </ligand>
</feature>
<feature type="binding site" evidence="4">
    <location>
        <position position="668"/>
    </location>
    <ligand>
        <name>Ca(2+)</name>
        <dbReference type="ChEBI" id="CHEBI:29108"/>
        <label>2</label>
    </ligand>
</feature>
<feature type="binding site" evidence="4">
    <location>
        <position position="670"/>
    </location>
    <ligand>
        <name>Ca(2+)</name>
        <dbReference type="ChEBI" id="CHEBI:29108"/>
        <label>1</label>
    </ligand>
</feature>
<feature type="binding site" evidence="4">
    <location>
        <position position="670"/>
    </location>
    <ligand>
        <name>Ca(2+)</name>
        <dbReference type="ChEBI" id="CHEBI:29108"/>
        <label>2</label>
    </ligand>
</feature>
<feature type="binding site" evidence="4">
    <location>
        <position position="687"/>
    </location>
    <ligand>
        <name>Ca(2+)</name>
        <dbReference type="ChEBI" id="CHEBI:29108"/>
        <label>2</label>
    </ligand>
</feature>
<feature type="modified residue" description="Phosphoserine" evidence="14">
    <location>
        <position position="16"/>
    </location>
</feature>
<feature type="modified residue" description="Phosphoserine" evidence="15">
    <location>
        <position position="176"/>
    </location>
</feature>
<feature type="modified residue" description="Phosphoserine" evidence="15">
    <location>
        <position position="295"/>
    </location>
</feature>
<feature type="modified residue" description="Phosphoserine" evidence="14">
    <location>
        <position position="367"/>
    </location>
</feature>
<feature type="splice variant" id="VSP_057319" description="In isoform 2." evidence="11">
    <original>Q</original>
    <variation>QVHDGKGIRFTANEDIRPEK</variation>
    <location>
        <position position="1412"/>
    </location>
</feature>
<feature type="sequence variant" id="VAR_036615" description="In a colorectal cancer sample; somatic mutation." evidence="9">
    <original>P</original>
    <variation>S</variation>
    <location>
        <position position="209"/>
    </location>
</feature>
<feature type="sequence variant" id="VAR_037273" description="In dbSNP:rs35199210.">
    <original>D</original>
    <variation>E</variation>
    <location>
        <position position="238"/>
    </location>
</feature>
<feature type="sequence variant" id="VAR_037274" description="In dbSNP:rs12339582.">
    <original>E</original>
    <variation>D</variation>
    <location>
        <position position="1232"/>
    </location>
</feature>
<feature type="sequence conflict" description="In Ref. 1; AAC19406." evidence="12" ref="1">
    <original>L</original>
    <variation>P</variation>
    <location>
        <position position="1207"/>
    </location>
</feature>
<feature type="sequence conflict" description="In Ref. 4; AAI11782." evidence="12" ref="4">
    <original>V</original>
    <variation>I</variation>
    <location>
        <position position="1214"/>
    </location>
</feature>
<feature type="sequence conflict" description="In Ref. 1; AAC19406." evidence="12" ref="1">
    <original>T</original>
    <variation>R</variation>
    <location>
        <position position="1404"/>
    </location>
</feature>
<feature type="sequence conflict" description="In Ref. 1; AAC19406." evidence="12" ref="1">
    <original>F</original>
    <variation>L</variation>
    <location>
        <position position="1497"/>
    </location>
</feature>
<proteinExistence type="evidence at protein level"/>